<sequence length="138" mass="15779">MRHARGYRRLNRTHEHRKAMFSNMCGSLIEHEQIKTTVPKAKELRPIIEKMITLAKRGDLHARRQAASQLKQDKDVAKLFEVLGPRYAERQGGYVRIMKAGFRYGDMAPMAIIEFVDRDVDAKGAADRARVEAEADAE</sequence>
<gene>
    <name evidence="1" type="primary">rplQ</name>
    <name type="ordered locus">Jann_0618</name>
</gene>
<evidence type="ECO:0000255" key="1">
    <source>
        <dbReference type="HAMAP-Rule" id="MF_01368"/>
    </source>
</evidence>
<evidence type="ECO:0000305" key="2"/>
<reference key="1">
    <citation type="submission" date="2006-02" db="EMBL/GenBank/DDBJ databases">
        <title>Complete sequence of chromosome of Jannaschia sp. CCS1.</title>
        <authorList>
            <consortium name="US DOE Joint Genome Institute"/>
            <person name="Copeland A."/>
            <person name="Lucas S."/>
            <person name="Lapidus A."/>
            <person name="Barry K."/>
            <person name="Detter J.C."/>
            <person name="Glavina del Rio T."/>
            <person name="Hammon N."/>
            <person name="Israni S."/>
            <person name="Pitluck S."/>
            <person name="Brettin T."/>
            <person name="Bruce D."/>
            <person name="Han C."/>
            <person name="Tapia R."/>
            <person name="Gilna P."/>
            <person name="Chertkov O."/>
            <person name="Saunders E."/>
            <person name="Schmutz J."/>
            <person name="Larimer F."/>
            <person name="Land M."/>
            <person name="Kyrpides N."/>
            <person name="Lykidis A."/>
            <person name="Moran M.A."/>
            <person name="Belas R."/>
            <person name="Ye W."/>
            <person name="Buchan A."/>
            <person name="Gonzalez J.M."/>
            <person name="Schell M.A."/>
            <person name="Richardson P."/>
        </authorList>
    </citation>
    <scope>NUCLEOTIDE SEQUENCE [LARGE SCALE GENOMIC DNA]</scope>
    <source>
        <strain>CCS1</strain>
    </source>
</reference>
<proteinExistence type="inferred from homology"/>
<accession>Q28US7</accession>
<protein>
    <recommendedName>
        <fullName evidence="1">Large ribosomal subunit protein bL17</fullName>
    </recommendedName>
    <alternativeName>
        <fullName evidence="2">50S ribosomal protein L17</fullName>
    </alternativeName>
</protein>
<organism>
    <name type="scientific">Jannaschia sp. (strain CCS1)</name>
    <dbReference type="NCBI Taxonomy" id="290400"/>
    <lineage>
        <taxon>Bacteria</taxon>
        <taxon>Pseudomonadati</taxon>
        <taxon>Pseudomonadota</taxon>
        <taxon>Alphaproteobacteria</taxon>
        <taxon>Rhodobacterales</taxon>
        <taxon>Roseobacteraceae</taxon>
        <taxon>Jannaschia</taxon>
    </lineage>
</organism>
<feature type="chain" id="PRO_0000267884" description="Large ribosomal subunit protein bL17">
    <location>
        <begin position="1"/>
        <end position="138"/>
    </location>
</feature>
<dbReference type="EMBL" id="CP000264">
    <property type="protein sequence ID" value="ABD53535.1"/>
    <property type="molecule type" value="Genomic_DNA"/>
</dbReference>
<dbReference type="RefSeq" id="WP_011453743.1">
    <property type="nucleotide sequence ID" value="NC_007802.1"/>
</dbReference>
<dbReference type="SMR" id="Q28US7"/>
<dbReference type="STRING" id="290400.Jann_0618"/>
<dbReference type="KEGG" id="jan:Jann_0618"/>
<dbReference type="eggNOG" id="COG0203">
    <property type="taxonomic scope" value="Bacteria"/>
</dbReference>
<dbReference type="HOGENOM" id="CLU_074407_2_0_5"/>
<dbReference type="OrthoDB" id="9809073at2"/>
<dbReference type="Proteomes" id="UP000008326">
    <property type="component" value="Chromosome"/>
</dbReference>
<dbReference type="GO" id="GO:0022625">
    <property type="term" value="C:cytosolic large ribosomal subunit"/>
    <property type="evidence" value="ECO:0007669"/>
    <property type="project" value="TreeGrafter"/>
</dbReference>
<dbReference type="GO" id="GO:0003735">
    <property type="term" value="F:structural constituent of ribosome"/>
    <property type="evidence" value="ECO:0007669"/>
    <property type="project" value="InterPro"/>
</dbReference>
<dbReference type="GO" id="GO:0006412">
    <property type="term" value="P:translation"/>
    <property type="evidence" value="ECO:0007669"/>
    <property type="project" value="UniProtKB-UniRule"/>
</dbReference>
<dbReference type="FunFam" id="3.90.1030.10:FF:000001">
    <property type="entry name" value="50S ribosomal protein L17"/>
    <property type="match status" value="1"/>
</dbReference>
<dbReference type="Gene3D" id="3.90.1030.10">
    <property type="entry name" value="Ribosomal protein L17"/>
    <property type="match status" value="1"/>
</dbReference>
<dbReference type="HAMAP" id="MF_01368">
    <property type="entry name" value="Ribosomal_bL17"/>
    <property type="match status" value="1"/>
</dbReference>
<dbReference type="InterPro" id="IPR000456">
    <property type="entry name" value="Ribosomal_bL17"/>
</dbReference>
<dbReference type="InterPro" id="IPR047859">
    <property type="entry name" value="Ribosomal_bL17_CS"/>
</dbReference>
<dbReference type="InterPro" id="IPR036373">
    <property type="entry name" value="Ribosomal_bL17_sf"/>
</dbReference>
<dbReference type="NCBIfam" id="TIGR00059">
    <property type="entry name" value="L17"/>
    <property type="match status" value="1"/>
</dbReference>
<dbReference type="PANTHER" id="PTHR14413:SF16">
    <property type="entry name" value="LARGE RIBOSOMAL SUBUNIT PROTEIN BL17M"/>
    <property type="match status" value="1"/>
</dbReference>
<dbReference type="PANTHER" id="PTHR14413">
    <property type="entry name" value="RIBOSOMAL PROTEIN L17"/>
    <property type="match status" value="1"/>
</dbReference>
<dbReference type="Pfam" id="PF01196">
    <property type="entry name" value="Ribosomal_L17"/>
    <property type="match status" value="1"/>
</dbReference>
<dbReference type="SUPFAM" id="SSF64263">
    <property type="entry name" value="Prokaryotic ribosomal protein L17"/>
    <property type="match status" value="1"/>
</dbReference>
<dbReference type="PROSITE" id="PS01167">
    <property type="entry name" value="RIBOSOMAL_L17"/>
    <property type="match status" value="1"/>
</dbReference>
<comment type="subunit">
    <text evidence="1">Part of the 50S ribosomal subunit. Contacts protein L32.</text>
</comment>
<comment type="similarity">
    <text evidence="1">Belongs to the bacterial ribosomal protein bL17 family.</text>
</comment>
<name>RL17_JANSC</name>
<keyword id="KW-1185">Reference proteome</keyword>
<keyword id="KW-0687">Ribonucleoprotein</keyword>
<keyword id="KW-0689">Ribosomal protein</keyword>